<reference key="1">
    <citation type="journal article" date="2011" name="J. Bacteriol.">
        <title>Comparative genomics of 28 Salmonella enterica isolates: evidence for CRISPR-mediated adaptive sublineage evolution.</title>
        <authorList>
            <person name="Fricke W.F."/>
            <person name="Mammel M.K."/>
            <person name="McDermott P.F."/>
            <person name="Tartera C."/>
            <person name="White D.G."/>
            <person name="Leclerc J.E."/>
            <person name="Ravel J."/>
            <person name="Cebula T.A."/>
        </authorList>
    </citation>
    <scope>NUCLEOTIDE SEQUENCE [LARGE SCALE GENOMIC DNA]</scope>
    <source>
        <strain>CT_02021853</strain>
    </source>
</reference>
<accession>B5FHA7</accession>
<keyword id="KW-0143">Chaperone</keyword>
<keyword id="KW-0963">Cytoplasm</keyword>
<keyword id="KW-0235">DNA replication</keyword>
<keyword id="KW-0479">Metal-binding</keyword>
<keyword id="KW-0677">Repeat</keyword>
<keyword id="KW-0346">Stress response</keyword>
<keyword id="KW-0862">Zinc</keyword>
<keyword id="KW-0863">Zinc-finger</keyword>
<dbReference type="EMBL" id="CP001144">
    <property type="protein sequence ID" value="ACH74872.1"/>
    <property type="molecule type" value="Genomic_DNA"/>
</dbReference>
<dbReference type="RefSeq" id="WP_001119009.1">
    <property type="nucleotide sequence ID" value="NC_011205.1"/>
</dbReference>
<dbReference type="SMR" id="B5FHA7"/>
<dbReference type="KEGG" id="sed:SeD_A0013"/>
<dbReference type="HOGENOM" id="CLU_017633_0_7_6"/>
<dbReference type="Proteomes" id="UP000008322">
    <property type="component" value="Chromosome"/>
</dbReference>
<dbReference type="GO" id="GO:0005737">
    <property type="term" value="C:cytoplasm"/>
    <property type="evidence" value="ECO:0007669"/>
    <property type="project" value="UniProtKB-SubCell"/>
</dbReference>
<dbReference type="GO" id="GO:0005524">
    <property type="term" value="F:ATP binding"/>
    <property type="evidence" value="ECO:0007669"/>
    <property type="project" value="InterPro"/>
</dbReference>
<dbReference type="GO" id="GO:0031072">
    <property type="term" value="F:heat shock protein binding"/>
    <property type="evidence" value="ECO:0007669"/>
    <property type="project" value="InterPro"/>
</dbReference>
<dbReference type="GO" id="GO:0051082">
    <property type="term" value="F:unfolded protein binding"/>
    <property type="evidence" value="ECO:0007669"/>
    <property type="project" value="UniProtKB-UniRule"/>
</dbReference>
<dbReference type="GO" id="GO:0008270">
    <property type="term" value="F:zinc ion binding"/>
    <property type="evidence" value="ECO:0007669"/>
    <property type="project" value="UniProtKB-UniRule"/>
</dbReference>
<dbReference type="GO" id="GO:0051085">
    <property type="term" value="P:chaperone cofactor-dependent protein refolding"/>
    <property type="evidence" value="ECO:0007669"/>
    <property type="project" value="TreeGrafter"/>
</dbReference>
<dbReference type="GO" id="GO:0006260">
    <property type="term" value="P:DNA replication"/>
    <property type="evidence" value="ECO:0007669"/>
    <property type="project" value="UniProtKB-KW"/>
</dbReference>
<dbReference type="GO" id="GO:0042026">
    <property type="term" value="P:protein refolding"/>
    <property type="evidence" value="ECO:0007669"/>
    <property type="project" value="TreeGrafter"/>
</dbReference>
<dbReference type="GO" id="GO:0009408">
    <property type="term" value="P:response to heat"/>
    <property type="evidence" value="ECO:0007669"/>
    <property type="project" value="InterPro"/>
</dbReference>
<dbReference type="CDD" id="cd06257">
    <property type="entry name" value="DnaJ"/>
    <property type="match status" value="1"/>
</dbReference>
<dbReference type="CDD" id="cd10747">
    <property type="entry name" value="DnaJ_C"/>
    <property type="match status" value="1"/>
</dbReference>
<dbReference type="CDD" id="cd10719">
    <property type="entry name" value="DnaJ_zf"/>
    <property type="match status" value="1"/>
</dbReference>
<dbReference type="FunFam" id="1.10.287.110:FF:000003">
    <property type="entry name" value="Molecular chaperone DnaJ"/>
    <property type="match status" value="1"/>
</dbReference>
<dbReference type="FunFam" id="2.10.230.10:FF:000002">
    <property type="entry name" value="Molecular chaperone DnaJ"/>
    <property type="match status" value="1"/>
</dbReference>
<dbReference type="FunFam" id="2.60.260.20:FF:000004">
    <property type="entry name" value="Molecular chaperone DnaJ"/>
    <property type="match status" value="1"/>
</dbReference>
<dbReference type="Gene3D" id="1.10.287.110">
    <property type="entry name" value="DnaJ domain"/>
    <property type="match status" value="1"/>
</dbReference>
<dbReference type="Gene3D" id="2.10.230.10">
    <property type="entry name" value="Heat shock protein DnaJ, cysteine-rich domain"/>
    <property type="match status" value="1"/>
</dbReference>
<dbReference type="Gene3D" id="2.60.260.20">
    <property type="entry name" value="Urease metallochaperone UreE, N-terminal domain"/>
    <property type="match status" value="2"/>
</dbReference>
<dbReference type="HAMAP" id="MF_01152">
    <property type="entry name" value="DnaJ"/>
    <property type="match status" value="1"/>
</dbReference>
<dbReference type="InterPro" id="IPR012724">
    <property type="entry name" value="DnaJ"/>
</dbReference>
<dbReference type="InterPro" id="IPR002939">
    <property type="entry name" value="DnaJ_C"/>
</dbReference>
<dbReference type="InterPro" id="IPR001623">
    <property type="entry name" value="DnaJ_domain"/>
</dbReference>
<dbReference type="InterPro" id="IPR018253">
    <property type="entry name" value="DnaJ_domain_CS"/>
</dbReference>
<dbReference type="InterPro" id="IPR008971">
    <property type="entry name" value="HSP40/DnaJ_pept-bd"/>
</dbReference>
<dbReference type="InterPro" id="IPR001305">
    <property type="entry name" value="HSP_DnaJ_Cys-rich_dom"/>
</dbReference>
<dbReference type="InterPro" id="IPR036410">
    <property type="entry name" value="HSP_DnaJ_Cys-rich_dom_sf"/>
</dbReference>
<dbReference type="InterPro" id="IPR036869">
    <property type="entry name" value="J_dom_sf"/>
</dbReference>
<dbReference type="NCBIfam" id="TIGR02349">
    <property type="entry name" value="DnaJ_bact"/>
    <property type="match status" value="1"/>
</dbReference>
<dbReference type="NCBIfam" id="NF008035">
    <property type="entry name" value="PRK10767.1"/>
    <property type="match status" value="1"/>
</dbReference>
<dbReference type="PANTHER" id="PTHR43096:SF48">
    <property type="entry name" value="CHAPERONE PROTEIN DNAJ"/>
    <property type="match status" value="1"/>
</dbReference>
<dbReference type="PANTHER" id="PTHR43096">
    <property type="entry name" value="DNAJ HOMOLOG 1, MITOCHONDRIAL-RELATED"/>
    <property type="match status" value="1"/>
</dbReference>
<dbReference type="Pfam" id="PF00226">
    <property type="entry name" value="DnaJ"/>
    <property type="match status" value="1"/>
</dbReference>
<dbReference type="Pfam" id="PF01556">
    <property type="entry name" value="DnaJ_C"/>
    <property type="match status" value="1"/>
</dbReference>
<dbReference type="Pfam" id="PF00684">
    <property type="entry name" value="DnaJ_CXXCXGXG"/>
    <property type="match status" value="1"/>
</dbReference>
<dbReference type="PRINTS" id="PR00625">
    <property type="entry name" value="JDOMAIN"/>
</dbReference>
<dbReference type="SMART" id="SM00271">
    <property type="entry name" value="DnaJ"/>
    <property type="match status" value="1"/>
</dbReference>
<dbReference type="SUPFAM" id="SSF46565">
    <property type="entry name" value="Chaperone J-domain"/>
    <property type="match status" value="1"/>
</dbReference>
<dbReference type="SUPFAM" id="SSF57938">
    <property type="entry name" value="DnaJ/Hsp40 cysteine-rich domain"/>
    <property type="match status" value="1"/>
</dbReference>
<dbReference type="SUPFAM" id="SSF49493">
    <property type="entry name" value="HSP40/DnaJ peptide-binding domain"/>
    <property type="match status" value="2"/>
</dbReference>
<dbReference type="PROSITE" id="PS00636">
    <property type="entry name" value="DNAJ_1"/>
    <property type="match status" value="1"/>
</dbReference>
<dbReference type="PROSITE" id="PS50076">
    <property type="entry name" value="DNAJ_2"/>
    <property type="match status" value="1"/>
</dbReference>
<dbReference type="PROSITE" id="PS51188">
    <property type="entry name" value="ZF_CR"/>
    <property type="match status" value="1"/>
</dbReference>
<evidence type="ECO:0000255" key="1">
    <source>
        <dbReference type="HAMAP-Rule" id="MF_01152"/>
    </source>
</evidence>
<protein>
    <recommendedName>
        <fullName evidence="1">Chaperone protein DnaJ</fullName>
    </recommendedName>
</protein>
<sequence>MAKRDYYEILGVSKTAEEREIKKAYKRLAMKYHPDRNQGDKEAEAKFKEIKEAYEVLTDAQKRAAYDQYGHAAFEQGGMGGGFGGGFNGGADFSDIFGDVFGDIFGGGRGRQRAARGADLRYNMDLTLEEAVRGVTKEIRIPTLEECDVCHGSGAKAGTQPQTCPTCHGSGQVQMRQGFFAVQQTCPHCQGRGTLIKDPCHKCHGHGRVEKSKTLSVKIPAGVDTGDRIRLAGEGEAGEHGAPAGDLYVQVQVKQHPIFEREGNNLYCEVPINFAMAALGGEIEVPTLDGRVMLKVPSETQTGKLFRMRGKGVKSVRGGAQGDLLCRVVVETPVGLSEKQKQLLKDLQESFGGPTGEKNSPRSKSFFDGVKKFFDDLTR</sequence>
<comment type="function">
    <text evidence="1">Participates actively in the response to hyperosmotic and heat shock by preventing the aggregation of stress-denatured proteins and by disaggregating proteins, also in an autonomous, DnaK-independent fashion. Unfolded proteins bind initially to DnaJ; upon interaction with the DnaJ-bound protein, DnaK hydrolyzes its bound ATP, resulting in the formation of a stable complex. GrpE releases ADP from DnaK; ATP binding to DnaK triggers the release of the substrate protein, thus completing the reaction cycle. Several rounds of ATP-dependent interactions between DnaJ, DnaK and GrpE are required for fully efficient folding. Also involved, together with DnaK and GrpE, in the DNA replication of plasmids through activation of initiation proteins.</text>
</comment>
<comment type="cofactor">
    <cofactor evidence="1">
        <name>Zn(2+)</name>
        <dbReference type="ChEBI" id="CHEBI:29105"/>
    </cofactor>
    <text evidence="1">Binds 2 Zn(2+) ions per monomer.</text>
</comment>
<comment type="subunit">
    <text evidence="1">Homodimer.</text>
</comment>
<comment type="subcellular location">
    <subcellularLocation>
        <location evidence="1">Cytoplasm</location>
    </subcellularLocation>
</comment>
<comment type="domain">
    <text evidence="1">The J domain is necessary and sufficient to stimulate DnaK ATPase activity. Zinc center 1 plays an important role in the autonomous, DnaK-independent chaperone activity of DnaJ. Zinc center 2 is essential for interaction with DnaK and for DnaJ activity.</text>
</comment>
<comment type="similarity">
    <text evidence="1">Belongs to the DnaJ family.</text>
</comment>
<feature type="chain" id="PRO_1000137720" description="Chaperone protein DnaJ">
    <location>
        <begin position="1"/>
        <end position="379"/>
    </location>
</feature>
<feature type="domain" description="J" evidence="1">
    <location>
        <begin position="5"/>
        <end position="70"/>
    </location>
</feature>
<feature type="repeat" description="CXXCXGXG motif">
    <location>
        <begin position="147"/>
        <end position="154"/>
    </location>
</feature>
<feature type="repeat" description="CXXCXGXG motif">
    <location>
        <begin position="164"/>
        <end position="171"/>
    </location>
</feature>
<feature type="repeat" description="CXXCXGXG motif">
    <location>
        <begin position="186"/>
        <end position="193"/>
    </location>
</feature>
<feature type="repeat" description="CXXCXGXG motif">
    <location>
        <begin position="200"/>
        <end position="207"/>
    </location>
</feature>
<feature type="zinc finger region" description="CR-type" evidence="1">
    <location>
        <begin position="134"/>
        <end position="212"/>
    </location>
</feature>
<feature type="binding site" evidence="1">
    <location>
        <position position="147"/>
    </location>
    <ligand>
        <name>Zn(2+)</name>
        <dbReference type="ChEBI" id="CHEBI:29105"/>
        <label>1</label>
    </ligand>
</feature>
<feature type="binding site" evidence="1">
    <location>
        <position position="150"/>
    </location>
    <ligand>
        <name>Zn(2+)</name>
        <dbReference type="ChEBI" id="CHEBI:29105"/>
        <label>1</label>
    </ligand>
</feature>
<feature type="binding site" evidence="1">
    <location>
        <position position="164"/>
    </location>
    <ligand>
        <name>Zn(2+)</name>
        <dbReference type="ChEBI" id="CHEBI:29105"/>
        <label>2</label>
    </ligand>
</feature>
<feature type="binding site" evidence="1">
    <location>
        <position position="167"/>
    </location>
    <ligand>
        <name>Zn(2+)</name>
        <dbReference type="ChEBI" id="CHEBI:29105"/>
        <label>2</label>
    </ligand>
</feature>
<feature type="binding site" evidence="1">
    <location>
        <position position="186"/>
    </location>
    <ligand>
        <name>Zn(2+)</name>
        <dbReference type="ChEBI" id="CHEBI:29105"/>
        <label>2</label>
    </ligand>
</feature>
<feature type="binding site" evidence="1">
    <location>
        <position position="189"/>
    </location>
    <ligand>
        <name>Zn(2+)</name>
        <dbReference type="ChEBI" id="CHEBI:29105"/>
        <label>2</label>
    </ligand>
</feature>
<feature type="binding site" evidence="1">
    <location>
        <position position="200"/>
    </location>
    <ligand>
        <name>Zn(2+)</name>
        <dbReference type="ChEBI" id="CHEBI:29105"/>
        <label>1</label>
    </ligand>
</feature>
<feature type="binding site" evidence="1">
    <location>
        <position position="203"/>
    </location>
    <ligand>
        <name>Zn(2+)</name>
        <dbReference type="ChEBI" id="CHEBI:29105"/>
        <label>1</label>
    </ligand>
</feature>
<name>DNAJ_SALDC</name>
<proteinExistence type="inferred from homology"/>
<gene>
    <name evidence="1" type="primary">dnaJ</name>
    <name type="ordered locus">SeD_A0013</name>
</gene>
<organism>
    <name type="scientific">Salmonella dublin (strain CT_02021853)</name>
    <dbReference type="NCBI Taxonomy" id="439851"/>
    <lineage>
        <taxon>Bacteria</taxon>
        <taxon>Pseudomonadati</taxon>
        <taxon>Pseudomonadota</taxon>
        <taxon>Gammaproteobacteria</taxon>
        <taxon>Enterobacterales</taxon>
        <taxon>Enterobacteriaceae</taxon>
        <taxon>Salmonella</taxon>
    </lineage>
</organism>